<name>UXUA_SALG2</name>
<accession>B5RE94</accession>
<organism>
    <name type="scientific">Salmonella gallinarum (strain 287/91 / NCTC 13346)</name>
    <dbReference type="NCBI Taxonomy" id="550538"/>
    <lineage>
        <taxon>Bacteria</taxon>
        <taxon>Pseudomonadati</taxon>
        <taxon>Pseudomonadota</taxon>
        <taxon>Gammaproteobacteria</taxon>
        <taxon>Enterobacterales</taxon>
        <taxon>Enterobacteriaceae</taxon>
        <taxon>Salmonella</taxon>
    </lineage>
</organism>
<reference key="1">
    <citation type="journal article" date="2008" name="Genome Res.">
        <title>Comparative genome analysis of Salmonella enteritidis PT4 and Salmonella gallinarum 287/91 provides insights into evolutionary and host adaptation pathways.</title>
        <authorList>
            <person name="Thomson N.R."/>
            <person name="Clayton D.J."/>
            <person name="Windhorst D."/>
            <person name="Vernikos G."/>
            <person name="Davidson S."/>
            <person name="Churcher C."/>
            <person name="Quail M.A."/>
            <person name="Stevens M."/>
            <person name="Jones M.A."/>
            <person name="Watson M."/>
            <person name="Barron A."/>
            <person name="Layton A."/>
            <person name="Pickard D."/>
            <person name="Kingsley R.A."/>
            <person name="Bignell A."/>
            <person name="Clark L."/>
            <person name="Harris B."/>
            <person name="Ormond D."/>
            <person name="Abdellah Z."/>
            <person name="Brooks K."/>
            <person name="Cherevach I."/>
            <person name="Chillingworth T."/>
            <person name="Woodward J."/>
            <person name="Norberczak H."/>
            <person name="Lord A."/>
            <person name="Arrowsmith C."/>
            <person name="Jagels K."/>
            <person name="Moule S."/>
            <person name="Mungall K."/>
            <person name="Saunders M."/>
            <person name="Whitehead S."/>
            <person name="Chabalgoity J.A."/>
            <person name="Maskell D."/>
            <person name="Humphreys T."/>
            <person name="Roberts M."/>
            <person name="Barrow P.A."/>
            <person name="Dougan G."/>
            <person name="Parkhill J."/>
        </authorList>
    </citation>
    <scope>NUCLEOTIDE SEQUENCE [LARGE SCALE GENOMIC DNA]</scope>
    <source>
        <strain>287/91 / NCTC 13346</strain>
    </source>
</reference>
<evidence type="ECO:0000255" key="1">
    <source>
        <dbReference type="HAMAP-Rule" id="MF_00106"/>
    </source>
</evidence>
<proteinExistence type="inferred from homology"/>
<dbReference type="EC" id="4.2.1.8" evidence="1"/>
<dbReference type="EMBL" id="AM933173">
    <property type="protein sequence ID" value="CAR38833.1"/>
    <property type="molecule type" value="Genomic_DNA"/>
</dbReference>
<dbReference type="RefSeq" id="WP_000815481.1">
    <property type="nucleotide sequence ID" value="NC_011274.1"/>
</dbReference>
<dbReference type="SMR" id="B5RE94"/>
<dbReference type="KEGG" id="seg:SG3029"/>
<dbReference type="HOGENOM" id="CLU_058621_2_0_6"/>
<dbReference type="UniPathway" id="UPA00246"/>
<dbReference type="Proteomes" id="UP000008321">
    <property type="component" value="Chromosome"/>
</dbReference>
<dbReference type="GO" id="GO:0008198">
    <property type="term" value="F:ferrous iron binding"/>
    <property type="evidence" value="ECO:0007669"/>
    <property type="project" value="TreeGrafter"/>
</dbReference>
<dbReference type="GO" id="GO:0030145">
    <property type="term" value="F:manganese ion binding"/>
    <property type="evidence" value="ECO:0007669"/>
    <property type="project" value="TreeGrafter"/>
</dbReference>
<dbReference type="GO" id="GO:0008927">
    <property type="term" value="F:mannonate dehydratase activity"/>
    <property type="evidence" value="ECO:0007669"/>
    <property type="project" value="UniProtKB-UniRule"/>
</dbReference>
<dbReference type="GO" id="GO:0042840">
    <property type="term" value="P:D-glucuronate catabolic process"/>
    <property type="evidence" value="ECO:0007669"/>
    <property type="project" value="TreeGrafter"/>
</dbReference>
<dbReference type="FunFam" id="3.20.20.150:FF:000004">
    <property type="entry name" value="Mannonate dehydratase"/>
    <property type="match status" value="1"/>
</dbReference>
<dbReference type="FunFam" id="3.20.20.150:FF:000005">
    <property type="entry name" value="Mannonate dehydratase"/>
    <property type="match status" value="1"/>
</dbReference>
<dbReference type="Gene3D" id="3.20.20.150">
    <property type="entry name" value="Divalent-metal-dependent TIM barrel enzymes"/>
    <property type="match status" value="2"/>
</dbReference>
<dbReference type="HAMAP" id="MF_00106">
    <property type="entry name" value="UxuA"/>
    <property type="match status" value="1"/>
</dbReference>
<dbReference type="InterPro" id="IPR004628">
    <property type="entry name" value="Man_deHydtase"/>
</dbReference>
<dbReference type="InterPro" id="IPR036237">
    <property type="entry name" value="Xyl_isomerase-like_sf"/>
</dbReference>
<dbReference type="NCBIfam" id="NF003027">
    <property type="entry name" value="PRK03906.1"/>
    <property type="match status" value="1"/>
</dbReference>
<dbReference type="NCBIfam" id="TIGR00695">
    <property type="entry name" value="uxuA"/>
    <property type="match status" value="1"/>
</dbReference>
<dbReference type="PANTHER" id="PTHR30387">
    <property type="entry name" value="MANNONATE DEHYDRATASE"/>
    <property type="match status" value="1"/>
</dbReference>
<dbReference type="PANTHER" id="PTHR30387:SF2">
    <property type="entry name" value="MANNONATE DEHYDRATASE"/>
    <property type="match status" value="1"/>
</dbReference>
<dbReference type="Pfam" id="PF03786">
    <property type="entry name" value="UxuA"/>
    <property type="match status" value="1"/>
</dbReference>
<dbReference type="PIRSF" id="PIRSF016049">
    <property type="entry name" value="Man_dehyd"/>
    <property type="match status" value="1"/>
</dbReference>
<dbReference type="SUPFAM" id="SSF51658">
    <property type="entry name" value="Xylose isomerase-like"/>
    <property type="match status" value="1"/>
</dbReference>
<keyword id="KW-0408">Iron</keyword>
<keyword id="KW-0456">Lyase</keyword>
<keyword id="KW-0464">Manganese</keyword>
<sequence length="394" mass="44882">MKQTWRWYGPNDPVTLSDVRQAGATGVVTALHHIPNGEIWSIDEIQKRKAIVEEAGLEWSVVESVPIHEDIKTHTGQYDLWIKNYQQTLSNLAQCGIYTVCYNFMPVLDWTRTDLEYVLPDGSKALRFDQIEFAAFELHILKRPGAEADYTAEEIAQAERRFATMSEEDKARLTRNIIAGLPGAEEGYTLDQFRQHLATYKDIDKAKLREHFAYFLKAIIPVADEVGVRMAVHPDDPPRPILGLPRIVSTIEDMQWMVETVNSMANGFTMCTGSYGVRADNDLVDMIKQFGPRIYFTHLRSTLREENPKTFHEAAHLHGDVDMYEVVKAIVEEEHRRKAEGSDDLIPMRPDHGHQMLDDLKKKTNPGYSAIGRLKGLAEVRGVELAIQRAFFSK</sequence>
<protein>
    <recommendedName>
        <fullName evidence="1">Mannonate dehydratase</fullName>
        <ecNumber evidence="1">4.2.1.8</ecNumber>
    </recommendedName>
    <alternativeName>
        <fullName evidence="1">D-mannonate hydro-lyase</fullName>
    </alternativeName>
</protein>
<comment type="function">
    <text evidence="1">Catalyzes the dehydration of D-mannonate.</text>
</comment>
<comment type="catalytic activity">
    <reaction evidence="1">
        <text>D-mannonate = 2-dehydro-3-deoxy-D-gluconate + H2O</text>
        <dbReference type="Rhea" id="RHEA:20097"/>
        <dbReference type="ChEBI" id="CHEBI:15377"/>
        <dbReference type="ChEBI" id="CHEBI:17767"/>
        <dbReference type="ChEBI" id="CHEBI:57990"/>
        <dbReference type="EC" id="4.2.1.8"/>
    </reaction>
</comment>
<comment type="cofactor">
    <cofactor evidence="1">
        <name>Fe(2+)</name>
        <dbReference type="ChEBI" id="CHEBI:29033"/>
    </cofactor>
    <cofactor evidence="1">
        <name>Mn(2+)</name>
        <dbReference type="ChEBI" id="CHEBI:29035"/>
    </cofactor>
</comment>
<comment type="pathway">
    <text evidence="1">Carbohydrate metabolism; pentose and glucuronate interconversion.</text>
</comment>
<comment type="similarity">
    <text evidence="1">Belongs to the mannonate dehydratase family.</text>
</comment>
<feature type="chain" id="PRO_1000094220" description="Mannonate dehydratase">
    <location>
        <begin position="1"/>
        <end position="394"/>
    </location>
</feature>
<gene>
    <name evidence="1" type="primary">uxuA</name>
    <name type="ordered locus">SG3029</name>
</gene>